<accession>P0A1G2</accession>
<accession>P18643</accession>
<evidence type="ECO:0000305" key="1"/>
<keyword id="KW-0227">DNA damage</keyword>
<keyword id="KW-0234">DNA repair</keyword>
<keyword id="KW-0614">Plasmid</keyword>
<dbReference type="EMBL" id="AF079316">
    <property type="protein sequence ID" value="AAD03591.1"/>
    <property type="molecule type" value="Genomic_DNA"/>
</dbReference>
<dbReference type="RefSeq" id="WP_000618110.1">
    <property type="nucleotide sequence ID" value="NZ_WPGU01000018.1"/>
</dbReference>
<dbReference type="SMR" id="P0A1G2"/>
<dbReference type="GO" id="GO:0006281">
    <property type="term" value="P:DNA repair"/>
    <property type="evidence" value="ECO:0007669"/>
    <property type="project" value="UniProtKB-KW"/>
</dbReference>
<dbReference type="GO" id="GO:0009432">
    <property type="term" value="P:SOS response"/>
    <property type="evidence" value="ECO:0007669"/>
    <property type="project" value="TreeGrafter"/>
</dbReference>
<dbReference type="Gene3D" id="3.30.910.10">
    <property type="entry name" value="DinI-like"/>
    <property type="match status" value="1"/>
</dbReference>
<dbReference type="InterPro" id="IPR036687">
    <property type="entry name" value="DinI-like_sf"/>
</dbReference>
<dbReference type="InterPro" id="IPR010391">
    <property type="entry name" value="DNA_damage-inducible_DinI-like"/>
</dbReference>
<dbReference type="PANTHER" id="PTHR36572:SF2">
    <property type="entry name" value="DNA DAMAGE-INDUCIBLE PROTEIN I"/>
    <property type="match status" value="1"/>
</dbReference>
<dbReference type="PANTHER" id="PTHR36572">
    <property type="entry name" value="DNA DAMAGE-INDUCIBLE PROTEIN I-RELATED"/>
    <property type="match status" value="1"/>
</dbReference>
<dbReference type="Pfam" id="PF06183">
    <property type="entry name" value="DinI"/>
    <property type="match status" value="1"/>
</dbReference>
<dbReference type="SUPFAM" id="SSF54857">
    <property type="entry name" value="DNA damage-inducible protein DinI"/>
    <property type="match status" value="1"/>
</dbReference>
<proteinExistence type="inferred from homology"/>
<protein>
    <recommendedName>
        <fullName>Protein ImpC</fullName>
    </recommendedName>
</protein>
<gene>
    <name type="primary">impC</name>
</gene>
<organism>
    <name type="scientific">Shigella flexneri</name>
    <dbReference type="NCBI Taxonomy" id="623"/>
    <lineage>
        <taxon>Bacteria</taxon>
        <taxon>Pseudomonadati</taxon>
        <taxon>Pseudomonadota</taxon>
        <taxon>Gammaproteobacteria</taxon>
        <taxon>Enterobacterales</taxon>
        <taxon>Enterobacteriaceae</taxon>
        <taxon>Shigella</taxon>
    </lineage>
</organism>
<name>IMPC_SHIFL</name>
<geneLocation type="plasmid">
    <name>pVP</name>
</geneLocation>
<reference key="1">
    <citation type="journal article" date="1999" name="Infect. Immun.">
        <title>The virulence plasmid-encoded impCAB operon enhances survival and induced mutagenesis in Shigella flexneri after exposure to UV radiation.</title>
        <authorList>
            <person name="Runyen-Janecky L.J."/>
            <person name="Hong M."/>
            <person name="Payne S.M."/>
        </authorList>
    </citation>
    <scope>NUCLEOTIDE SEQUENCE [GENOMIC DNA]</scope>
    <source>
        <strain>SA100 / Serotype 2a</strain>
    </source>
</reference>
<comment type="function">
    <text>The imp operon is involved in UV protection and mutation, however the ImpC protein is not essential for these functions.</text>
</comment>
<comment type="similarity">
    <text evidence="1">Belongs to the DinI family.</text>
</comment>
<feature type="chain" id="PRO_0000201641" description="Protein ImpC">
    <location>
        <begin position="1"/>
        <end position="82"/>
    </location>
</feature>
<sequence>MIRIEILFDRQSTKNLKSGTLQALQNEIEQRLKPHYPEIWLRIDQGSAPSVSVTGARNDKDKERILSLLEEIWQDDSWLPAA</sequence>